<keyword id="KW-0963">Cytoplasm</keyword>
<keyword id="KW-0255">Endonuclease</keyword>
<keyword id="KW-0378">Hydrolase</keyword>
<keyword id="KW-0464">Manganese</keyword>
<keyword id="KW-0479">Metal-binding</keyword>
<keyword id="KW-0540">Nuclease</keyword>
<keyword id="KW-1185">Reference proteome</keyword>
<proteinExistence type="inferred from homology"/>
<reference key="1">
    <citation type="journal article" date="2004" name="J. Mol. Microbiol. Biotechnol.">
        <title>The complete genome sequence of Bacillus licheniformis DSM13, an organism with great industrial potential.</title>
        <authorList>
            <person name="Veith B."/>
            <person name="Herzberg C."/>
            <person name="Steckel S."/>
            <person name="Feesche J."/>
            <person name="Maurer K.H."/>
            <person name="Ehrenreich P."/>
            <person name="Baeumer S."/>
            <person name="Henne A."/>
            <person name="Liesegang H."/>
            <person name="Merkl R."/>
            <person name="Ehrenreich A."/>
            <person name="Gottschalk G."/>
        </authorList>
    </citation>
    <scope>NUCLEOTIDE SEQUENCE [LARGE SCALE GENOMIC DNA]</scope>
    <source>
        <strain>ATCC 14580 / DSM 13 / JCM 2505 / CCUG 7422 / NBRC 12200 / NCIMB 9375 / NCTC 10341 / NRRL NRS-1264 / Gibson 46</strain>
    </source>
</reference>
<reference key="2">
    <citation type="journal article" date="2004" name="Genome Biol.">
        <title>Complete genome sequence of the industrial bacterium Bacillus licheniformis and comparisons with closely related Bacillus species.</title>
        <authorList>
            <person name="Rey M.W."/>
            <person name="Ramaiya P."/>
            <person name="Nelson B.A."/>
            <person name="Brody-Karpin S.D."/>
            <person name="Zaretsky E.J."/>
            <person name="Tang M."/>
            <person name="Lopez de Leon A."/>
            <person name="Xiang H."/>
            <person name="Gusti V."/>
            <person name="Clausen I.G."/>
            <person name="Olsen P.B."/>
            <person name="Rasmussen M.D."/>
            <person name="Andersen J.T."/>
            <person name="Joergensen P.L."/>
            <person name="Larsen T.S."/>
            <person name="Sorokin A."/>
            <person name="Bolotin A."/>
            <person name="Lapidus A."/>
            <person name="Galleron N."/>
            <person name="Ehrlich S.D."/>
            <person name="Berka R.M."/>
        </authorList>
    </citation>
    <scope>NUCLEOTIDE SEQUENCE [LARGE SCALE GENOMIC DNA]</scope>
    <source>
        <strain>ATCC 14580 / DSM 13 / JCM 2505 / CCUG 7422 / NBRC 12200 / NCIMB 9375 / NCTC 10341 / NRRL NRS-1264 / Gibson 46</strain>
    </source>
</reference>
<feature type="chain" id="PRO_0000111540" description="Ribonuclease HII">
    <location>
        <begin position="1"/>
        <end position="255"/>
    </location>
</feature>
<feature type="domain" description="RNase H type-2" evidence="2">
    <location>
        <begin position="72"/>
        <end position="255"/>
    </location>
</feature>
<feature type="binding site" evidence="1">
    <location>
        <position position="78"/>
    </location>
    <ligand>
        <name>a divalent metal cation</name>
        <dbReference type="ChEBI" id="CHEBI:60240"/>
    </ligand>
</feature>
<feature type="binding site" evidence="1">
    <location>
        <position position="79"/>
    </location>
    <ligand>
        <name>a divalent metal cation</name>
        <dbReference type="ChEBI" id="CHEBI:60240"/>
    </ligand>
</feature>
<feature type="binding site" evidence="1">
    <location>
        <position position="170"/>
    </location>
    <ligand>
        <name>a divalent metal cation</name>
        <dbReference type="ChEBI" id="CHEBI:60240"/>
    </ligand>
</feature>
<accession>Q65JP3</accession>
<accession>Q62V48</accession>
<evidence type="ECO:0000255" key="1">
    <source>
        <dbReference type="HAMAP-Rule" id="MF_00052"/>
    </source>
</evidence>
<evidence type="ECO:0000255" key="2">
    <source>
        <dbReference type="PROSITE-ProRule" id="PRU01319"/>
    </source>
</evidence>
<dbReference type="EC" id="3.1.26.4" evidence="1"/>
<dbReference type="EMBL" id="AE017333">
    <property type="protein sequence ID" value="AAU40721.1"/>
    <property type="molecule type" value="Genomic_DNA"/>
</dbReference>
<dbReference type="EMBL" id="CP000002">
    <property type="protein sequence ID" value="AAU23361.1"/>
    <property type="molecule type" value="Genomic_DNA"/>
</dbReference>
<dbReference type="RefSeq" id="WP_003181732.1">
    <property type="nucleotide sequence ID" value="NC_006322.1"/>
</dbReference>
<dbReference type="SMR" id="Q65JP3"/>
<dbReference type="STRING" id="279010.BL01288"/>
<dbReference type="KEGG" id="bld:BLi01826"/>
<dbReference type="KEGG" id="bli:BL01288"/>
<dbReference type="PATRIC" id="fig|279010.13.peg.1825"/>
<dbReference type="eggNOG" id="COG0164">
    <property type="taxonomic scope" value="Bacteria"/>
</dbReference>
<dbReference type="HOGENOM" id="CLU_036532_2_1_9"/>
<dbReference type="Proteomes" id="UP000000606">
    <property type="component" value="Chromosome"/>
</dbReference>
<dbReference type="GO" id="GO:0005737">
    <property type="term" value="C:cytoplasm"/>
    <property type="evidence" value="ECO:0007669"/>
    <property type="project" value="UniProtKB-SubCell"/>
</dbReference>
<dbReference type="GO" id="GO:0032299">
    <property type="term" value="C:ribonuclease H2 complex"/>
    <property type="evidence" value="ECO:0007669"/>
    <property type="project" value="TreeGrafter"/>
</dbReference>
<dbReference type="GO" id="GO:0030145">
    <property type="term" value="F:manganese ion binding"/>
    <property type="evidence" value="ECO:0007669"/>
    <property type="project" value="UniProtKB-UniRule"/>
</dbReference>
<dbReference type="GO" id="GO:0003723">
    <property type="term" value="F:RNA binding"/>
    <property type="evidence" value="ECO:0007669"/>
    <property type="project" value="InterPro"/>
</dbReference>
<dbReference type="GO" id="GO:0004523">
    <property type="term" value="F:RNA-DNA hybrid ribonuclease activity"/>
    <property type="evidence" value="ECO:0007669"/>
    <property type="project" value="UniProtKB-UniRule"/>
</dbReference>
<dbReference type="GO" id="GO:0043137">
    <property type="term" value="P:DNA replication, removal of RNA primer"/>
    <property type="evidence" value="ECO:0007669"/>
    <property type="project" value="TreeGrafter"/>
</dbReference>
<dbReference type="GO" id="GO:0006298">
    <property type="term" value="P:mismatch repair"/>
    <property type="evidence" value="ECO:0007669"/>
    <property type="project" value="TreeGrafter"/>
</dbReference>
<dbReference type="CDD" id="cd07182">
    <property type="entry name" value="RNase_HII_bacteria_HII_like"/>
    <property type="match status" value="1"/>
</dbReference>
<dbReference type="FunFam" id="3.30.420.10:FF:000006">
    <property type="entry name" value="Ribonuclease HII"/>
    <property type="match status" value="1"/>
</dbReference>
<dbReference type="Gene3D" id="3.30.420.10">
    <property type="entry name" value="Ribonuclease H-like superfamily/Ribonuclease H"/>
    <property type="match status" value="1"/>
</dbReference>
<dbReference type="HAMAP" id="MF_00052_B">
    <property type="entry name" value="RNase_HII_B"/>
    <property type="match status" value="1"/>
</dbReference>
<dbReference type="InterPro" id="IPR022898">
    <property type="entry name" value="RNase_HII"/>
</dbReference>
<dbReference type="InterPro" id="IPR001352">
    <property type="entry name" value="RNase_HII/HIII"/>
</dbReference>
<dbReference type="InterPro" id="IPR024567">
    <property type="entry name" value="RNase_HII/HIII_dom"/>
</dbReference>
<dbReference type="InterPro" id="IPR012337">
    <property type="entry name" value="RNaseH-like_sf"/>
</dbReference>
<dbReference type="InterPro" id="IPR036397">
    <property type="entry name" value="RNaseH_sf"/>
</dbReference>
<dbReference type="NCBIfam" id="NF000594">
    <property type="entry name" value="PRK00015.1-1"/>
    <property type="match status" value="1"/>
</dbReference>
<dbReference type="NCBIfam" id="NF000595">
    <property type="entry name" value="PRK00015.1-3"/>
    <property type="match status" value="1"/>
</dbReference>
<dbReference type="PANTHER" id="PTHR10954">
    <property type="entry name" value="RIBONUCLEASE H2 SUBUNIT A"/>
    <property type="match status" value="1"/>
</dbReference>
<dbReference type="PANTHER" id="PTHR10954:SF18">
    <property type="entry name" value="RIBONUCLEASE HII"/>
    <property type="match status" value="1"/>
</dbReference>
<dbReference type="Pfam" id="PF01351">
    <property type="entry name" value="RNase_HII"/>
    <property type="match status" value="1"/>
</dbReference>
<dbReference type="SUPFAM" id="SSF53098">
    <property type="entry name" value="Ribonuclease H-like"/>
    <property type="match status" value="1"/>
</dbReference>
<dbReference type="PROSITE" id="PS51975">
    <property type="entry name" value="RNASE_H_2"/>
    <property type="match status" value="1"/>
</dbReference>
<protein>
    <recommendedName>
        <fullName evidence="1">Ribonuclease HII</fullName>
        <shortName evidence="1">RNase HII</shortName>
        <ecNumber evidence="1">3.1.26.4</ecNumber>
    </recommendedName>
</protein>
<organism>
    <name type="scientific">Bacillus licheniformis (strain ATCC 14580 / DSM 13 / JCM 2505 / CCUG 7422 / NBRC 12200 / NCIMB 9375 / NCTC 10341 / NRRL NRS-1264 / Gibson 46)</name>
    <dbReference type="NCBI Taxonomy" id="279010"/>
    <lineage>
        <taxon>Bacteria</taxon>
        <taxon>Bacillati</taxon>
        <taxon>Bacillota</taxon>
        <taxon>Bacilli</taxon>
        <taxon>Bacillales</taxon>
        <taxon>Bacillaceae</taxon>
        <taxon>Bacillus</taxon>
    </lineage>
</organism>
<comment type="function">
    <text evidence="1">Endonuclease that specifically degrades the RNA of RNA-DNA hybrids.</text>
</comment>
<comment type="catalytic activity">
    <reaction evidence="1">
        <text>Endonucleolytic cleavage to 5'-phosphomonoester.</text>
        <dbReference type="EC" id="3.1.26.4"/>
    </reaction>
</comment>
<comment type="cofactor">
    <cofactor evidence="1">
        <name>Mn(2+)</name>
        <dbReference type="ChEBI" id="CHEBI:29035"/>
    </cofactor>
    <cofactor evidence="1">
        <name>Mg(2+)</name>
        <dbReference type="ChEBI" id="CHEBI:18420"/>
    </cofactor>
    <text evidence="1">Manganese or magnesium. Binds 1 divalent metal ion per monomer in the absence of substrate. May bind a second metal ion after substrate binding.</text>
</comment>
<comment type="subcellular location">
    <subcellularLocation>
        <location evidence="1">Cytoplasm</location>
    </subcellularLocation>
</comment>
<comment type="similarity">
    <text evidence="1">Belongs to the RNase HII family.</text>
</comment>
<sequence>MKTLTVKEIKEHLQSVSDEKDPFIEQCKNDERKSVQALVDAWLKKNERLSAMREEWQAMTSFERSLRARGYQYIAGIDEAGRGPLAGPVVAAAVILKEDCEILGLTDSKKLSKQKREDYYSYIMEEAAAVGVGIADAHEIDELNIYEASKAAMLKAVQALDVAPDYLLIDAMSLAVDTEQSSIIKGDAKSASIAAGACIAKVTRDRLMDEYAEKYPLYGFEKHKGYGTKEHLNALAKYGPSPIHRRSFAPVKAHE</sequence>
<name>RNH2_BACLD</name>
<gene>
    <name evidence="1" type="primary">rnhB</name>
    <name type="ordered locus">BLi01826</name>
    <name type="ordered locus">BL01288</name>
</gene>